<organism>
    <name type="scientific">Yersinia pseudotuberculosis serotype IB (strain PB1/+)</name>
    <dbReference type="NCBI Taxonomy" id="502801"/>
    <lineage>
        <taxon>Bacteria</taxon>
        <taxon>Pseudomonadati</taxon>
        <taxon>Pseudomonadota</taxon>
        <taxon>Gammaproteobacteria</taxon>
        <taxon>Enterobacterales</taxon>
        <taxon>Yersiniaceae</taxon>
        <taxon>Yersinia</taxon>
    </lineage>
</organism>
<reference key="1">
    <citation type="submission" date="2008-04" db="EMBL/GenBank/DDBJ databases">
        <title>Complete sequence of Yersinia pseudotuberculosis PB1/+.</title>
        <authorList>
            <person name="Copeland A."/>
            <person name="Lucas S."/>
            <person name="Lapidus A."/>
            <person name="Glavina del Rio T."/>
            <person name="Dalin E."/>
            <person name="Tice H."/>
            <person name="Bruce D."/>
            <person name="Goodwin L."/>
            <person name="Pitluck S."/>
            <person name="Munk A.C."/>
            <person name="Brettin T."/>
            <person name="Detter J.C."/>
            <person name="Han C."/>
            <person name="Tapia R."/>
            <person name="Schmutz J."/>
            <person name="Larimer F."/>
            <person name="Land M."/>
            <person name="Hauser L."/>
            <person name="Challacombe J.F."/>
            <person name="Green L."/>
            <person name="Lindler L.E."/>
            <person name="Nikolich M.P."/>
            <person name="Richardson P."/>
        </authorList>
    </citation>
    <scope>NUCLEOTIDE SEQUENCE [LARGE SCALE GENOMIC DNA]</scope>
    <source>
        <strain>PB1/+</strain>
    </source>
</reference>
<sequence>MALTRLLIKDFRNIESADLALAAGFNFLVGPNGSGKTSVLEAVYTLGHGRAFRSLQAGRVIRHECAEFVLHGRVDANEREASVGLSKSRQGDTKVRIDGTDGHKVAELAQMLPMQLITPEGFTLLNGGPKFRRAFLDWGCFHNEPGFFTAWSNLKRLLKQRNAALRQVSRYTQIRAWDQEIIPLAERISEWRAAYSDAIAADISATCALFLPEFALSFFFQRGWDKESDYGELLARQFERDRALTYTAVGPHKADFRIRADGTPVEDLLSRGQLKLLMCALRLAQGEFLTRQSGRRCLYLLDDFASELDTGRRRLLAERLKATQAQVFVSAVSAEQVADMVGEKGKMFRVEHGKIEVQPQD</sequence>
<name>RECF_YERPB</name>
<feature type="chain" id="PRO_1000121171" description="DNA replication and repair protein RecF">
    <location>
        <begin position="1"/>
        <end position="361"/>
    </location>
</feature>
<feature type="binding site" evidence="1">
    <location>
        <begin position="30"/>
        <end position="37"/>
    </location>
    <ligand>
        <name>ATP</name>
        <dbReference type="ChEBI" id="CHEBI:30616"/>
    </ligand>
</feature>
<evidence type="ECO:0000255" key="1">
    <source>
        <dbReference type="HAMAP-Rule" id="MF_00365"/>
    </source>
</evidence>
<proteinExistence type="inferred from homology"/>
<keyword id="KW-0067">ATP-binding</keyword>
<keyword id="KW-0963">Cytoplasm</keyword>
<keyword id="KW-0227">DNA damage</keyword>
<keyword id="KW-0234">DNA repair</keyword>
<keyword id="KW-0235">DNA replication</keyword>
<keyword id="KW-0238">DNA-binding</keyword>
<keyword id="KW-0547">Nucleotide-binding</keyword>
<keyword id="KW-0742">SOS response</keyword>
<comment type="function">
    <text evidence="1">The RecF protein is involved in DNA metabolism; it is required for DNA replication and normal SOS inducibility. RecF binds preferentially to single-stranded, linear DNA. It also seems to bind ATP.</text>
</comment>
<comment type="subcellular location">
    <subcellularLocation>
        <location evidence="1">Cytoplasm</location>
    </subcellularLocation>
</comment>
<comment type="similarity">
    <text evidence="1">Belongs to the RecF family.</text>
</comment>
<gene>
    <name evidence="1" type="primary">recF</name>
    <name type="ordered locus">YPTS_0003</name>
</gene>
<accession>B2JYI8</accession>
<dbReference type="EMBL" id="CP001048">
    <property type="protein sequence ID" value="ACC87002.1"/>
    <property type="molecule type" value="Genomic_DNA"/>
</dbReference>
<dbReference type="RefSeq" id="WP_012413397.1">
    <property type="nucleotide sequence ID" value="NZ_CP009780.1"/>
</dbReference>
<dbReference type="SMR" id="B2JYI8"/>
<dbReference type="KEGG" id="ypb:YPTS_0003"/>
<dbReference type="PATRIC" id="fig|502801.10.peg.3679"/>
<dbReference type="GO" id="GO:0005737">
    <property type="term" value="C:cytoplasm"/>
    <property type="evidence" value="ECO:0007669"/>
    <property type="project" value="UniProtKB-SubCell"/>
</dbReference>
<dbReference type="GO" id="GO:0005524">
    <property type="term" value="F:ATP binding"/>
    <property type="evidence" value="ECO:0007669"/>
    <property type="project" value="UniProtKB-UniRule"/>
</dbReference>
<dbReference type="GO" id="GO:0003697">
    <property type="term" value="F:single-stranded DNA binding"/>
    <property type="evidence" value="ECO:0007669"/>
    <property type="project" value="UniProtKB-UniRule"/>
</dbReference>
<dbReference type="GO" id="GO:0006260">
    <property type="term" value="P:DNA replication"/>
    <property type="evidence" value="ECO:0007669"/>
    <property type="project" value="UniProtKB-UniRule"/>
</dbReference>
<dbReference type="GO" id="GO:0000731">
    <property type="term" value="P:DNA synthesis involved in DNA repair"/>
    <property type="evidence" value="ECO:0007669"/>
    <property type="project" value="TreeGrafter"/>
</dbReference>
<dbReference type="GO" id="GO:0006302">
    <property type="term" value="P:double-strand break repair"/>
    <property type="evidence" value="ECO:0007669"/>
    <property type="project" value="TreeGrafter"/>
</dbReference>
<dbReference type="GO" id="GO:0009432">
    <property type="term" value="P:SOS response"/>
    <property type="evidence" value="ECO:0007669"/>
    <property type="project" value="UniProtKB-UniRule"/>
</dbReference>
<dbReference type="FunFam" id="1.20.1050.90:FF:000001">
    <property type="entry name" value="DNA replication and repair protein RecF"/>
    <property type="match status" value="1"/>
</dbReference>
<dbReference type="Gene3D" id="3.40.50.300">
    <property type="entry name" value="P-loop containing nucleotide triphosphate hydrolases"/>
    <property type="match status" value="1"/>
</dbReference>
<dbReference type="Gene3D" id="1.20.1050.90">
    <property type="entry name" value="RecF/RecN/SMC, N-terminal domain"/>
    <property type="match status" value="1"/>
</dbReference>
<dbReference type="HAMAP" id="MF_00365">
    <property type="entry name" value="RecF"/>
    <property type="match status" value="1"/>
</dbReference>
<dbReference type="InterPro" id="IPR001238">
    <property type="entry name" value="DNA-binding_RecF"/>
</dbReference>
<dbReference type="InterPro" id="IPR018078">
    <property type="entry name" value="DNA-binding_RecF_CS"/>
</dbReference>
<dbReference type="InterPro" id="IPR027417">
    <property type="entry name" value="P-loop_NTPase"/>
</dbReference>
<dbReference type="InterPro" id="IPR003395">
    <property type="entry name" value="RecF/RecN/SMC_N"/>
</dbReference>
<dbReference type="InterPro" id="IPR042174">
    <property type="entry name" value="RecF_2"/>
</dbReference>
<dbReference type="NCBIfam" id="TIGR00611">
    <property type="entry name" value="recf"/>
    <property type="match status" value="1"/>
</dbReference>
<dbReference type="PANTHER" id="PTHR32182">
    <property type="entry name" value="DNA REPLICATION AND REPAIR PROTEIN RECF"/>
    <property type="match status" value="1"/>
</dbReference>
<dbReference type="PANTHER" id="PTHR32182:SF0">
    <property type="entry name" value="DNA REPLICATION AND REPAIR PROTEIN RECF"/>
    <property type="match status" value="1"/>
</dbReference>
<dbReference type="Pfam" id="PF02463">
    <property type="entry name" value="SMC_N"/>
    <property type="match status" value="1"/>
</dbReference>
<dbReference type="SUPFAM" id="SSF52540">
    <property type="entry name" value="P-loop containing nucleoside triphosphate hydrolases"/>
    <property type="match status" value="1"/>
</dbReference>
<dbReference type="PROSITE" id="PS00617">
    <property type="entry name" value="RECF_1"/>
    <property type="match status" value="1"/>
</dbReference>
<dbReference type="PROSITE" id="PS00618">
    <property type="entry name" value="RECF_2"/>
    <property type="match status" value="1"/>
</dbReference>
<protein>
    <recommendedName>
        <fullName evidence="1">DNA replication and repair protein RecF</fullName>
    </recommendedName>
</protein>